<proteinExistence type="inferred from homology"/>
<reference key="1">
    <citation type="journal article" date="2009" name="Infect. Immun.">
        <title>Comparative genomics reveal extensive transposon-mediated genomic plasticity and diversity among potential effector proteins within the genus Coxiella.</title>
        <authorList>
            <person name="Beare P.A."/>
            <person name="Unsworth N."/>
            <person name="Andoh M."/>
            <person name="Voth D.E."/>
            <person name="Omsland A."/>
            <person name="Gilk S.D."/>
            <person name="Williams K.P."/>
            <person name="Sobral B.W."/>
            <person name="Kupko J.J. III"/>
            <person name="Porcella S.F."/>
            <person name="Samuel J.E."/>
            <person name="Heinzen R.A."/>
        </authorList>
    </citation>
    <scope>NUCLEOTIDE SEQUENCE [LARGE SCALE GENOMIC DNA]</scope>
    <source>
        <strain>Dugway 5J108-111</strain>
    </source>
</reference>
<accession>A9KDD3</accession>
<comment type="function">
    <text evidence="1">Catalyzes the ATP-dependent conversion of 7-carboxy-7-deazaguanine (CDG) to 7-cyano-7-deazaguanine (preQ(0)).</text>
</comment>
<comment type="catalytic activity">
    <reaction evidence="1">
        <text>7-carboxy-7-deazaguanine + NH4(+) + ATP = 7-cyano-7-deazaguanine + ADP + phosphate + H2O + H(+)</text>
        <dbReference type="Rhea" id="RHEA:27982"/>
        <dbReference type="ChEBI" id="CHEBI:15377"/>
        <dbReference type="ChEBI" id="CHEBI:15378"/>
        <dbReference type="ChEBI" id="CHEBI:28938"/>
        <dbReference type="ChEBI" id="CHEBI:30616"/>
        <dbReference type="ChEBI" id="CHEBI:43474"/>
        <dbReference type="ChEBI" id="CHEBI:45075"/>
        <dbReference type="ChEBI" id="CHEBI:61036"/>
        <dbReference type="ChEBI" id="CHEBI:456216"/>
        <dbReference type="EC" id="6.3.4.20"/>
    </reaction>
</comment>
<comment type="cofactor">
    <cofactor evidence="1">
        <name>Zn(2+)</name>
        <dbReference type="ChEBI" id="CHEBI:29105"/>
    </cofactor>
    <text evidence="1">Binds 1 zinc ion per subunit.</text>
</comment>
<comment type="pathway">
    <text evidence="1">Purine metabolism; 7-cyano-7-deazaguanine biosynthesis.</text>
</comment>
<comment type="similarity">
    <text evidence="1">Belongs to the QueC family.</text>
</comment>
<comment type="sequence caution" evidence="2">
    <conflict type="erroneous initiation">
        <sequence resource="EMBL-CDS" id="ABS77553"/>
    </conflict>
</comment>
<organism>
    <name type="scientific">Coxiella burnetii (strain Dugway 5J108-111)</name>
    <dbReference type="NCBI Taxonomy" id="434922"/>
    <lineage>
        <taxon>Bacteria</taxon>
        <taxon>Pseudomonadati</taxon>
        <taxon>Pseudomonadota</taxon>
        <taxon>Gammaproteobacteria</taxon>
        <taxon>Legionellales</taxon>
        <taxon>Coxiellaceae</taxon>
        <taxon>Coxiella</taxon>
    </lineage>
</organism>
<gene>
    <name evidence="1" type="primary">queC</name>
    <name type="ordered locus">CBUD_2179</name>
</gene>
<keyword id="KW-0067">ATP-binding</keyword>
<keyword id="KW-0436">Ligase</keyword>
<keyword id="KW-0479">Metal-binding</keyword>
<keyword id="KW-0547">Nucleotide-binding</keyword>
<keyword id="KW-0671">Queuosine biosynthesis</keyword>
<keyword id="KW-0862">Zinc</keyword>
<name>QUEC_COXBN</name>
<feature type="chain" id="PRO_1000088150" description="7-cyano-7-deazaguanine synthase">
    <location>
        <begin position="1"/>
        <end position="226"/>
    </location>
</feature>
<feature type="binding site" evidence="1">
    <location>
        <begin position="8"/>
        <end position="18"/>
    </location>
    <ligand>
        <name>ATP</name>
        <dbReference type="ChEBI" id="CHEBI:30616"/>
    </ligand>
</feature>
<feature type="binding site" evidence="1">
    <location>
        <position position="188"/>
    </location>
    <ligand>
        <name>Zn(2+)</name>
        <dbReference type="ChEBI" id="CHEBI:29105"/>
    </ligand>
</feature>
<feature type="binding site" evidence="1">
    <location>
        <position position="198"/>
    </location>
    <ligand>
        <name>Zn(2+)</name>
        <dbReference type="ChEBI" id="CHEBI:29105"/>
    </ligand>
</feature>
<feature type="binding site" evidence="1">
    <location>
        <position position="201"/>
    </location>
    <ligand>
        <name>Zn(2+)</name>
        <dbReference type="ChEBI" id="CHEBI:29105"/>
    </ligand>
</feature>
<feature type="binding site" evidence="1">
    <location>
        <position position="204"/>
    </location>
    <ligand>
        <name>Zn(2+)</name>
        <dbReference type="ChEBI" id="CHEBI:29105"/>
    </ligand>
</feature>
<protein>
    <recommendedName>
        <fullName evidence="1">7-cyano-7-deazaguanine synthase</fullName>
        <ecNumber evidence="1">6.3.4.20</ecNumber>
    </recommendedName>
    <alternativeName>
        <fullName evidence="1">7-cyano-7-carbaguanine synthase</fullName>
    </alternativeName>
    <alternativeName>
        <fullName evidence="1">PreQ(0) synthase</fullName>
    </alternativeName>
    <alternativeName>
        <fullName evidence="1">Queuosine biosynthesis protein QueC</fullName>
    </alternativeName>
</protein>
<evidence type="ECO:0000255" key="1">
    <source>
        <dbReference type="HAMAP-Rule" id="MF_01633"/>
    </source>
</evidence>
<evidence type="ECO:0000305" key="2"/>
<sequence>MKKAVILISGGLDSTTCLAVAKSKGFACYALSFDYGQKHHSELVAAEKIAAHFNVVRYEVVTLSIGKLGGSALTDNSLDVPDYGGNESIPITYVPARNTIFLSIALGWAEILDAESILIGASAIDYSGYPDCRPEYIAAFQNLANLATKRGIEGHSIKIEAPLIHLSKAETIKLGYSLGVDYSMTVSCYRANEEGLACGYCDSCELRKKGFKEAEIKDPTQYITKV</sequence>
<dbReference type="EC" id="6.3.4.20" evidence="1"/>
<dbReference type="EMBL" id="CP000733">
    <property type="protein sequence ID" value="ABS77553.2"/>
    <property type="status" value="ALT_INIT"/>
    <property type="molecule type" value="Genomic_DNA"/>
</dbReference>
<dbReference type="RefSeq" id="WP_005769910.1">
    <property type="nucleotide sequence ID" value="NC_009727.1"/>
</dbReference>
<dbReference type="SMR" id="A9KDD3"/>
<dbReference type="KEGG" id="cbd:CBUD_2179"/>
<dbReference type="HOGENOM" id="CLU_081854_1_0_6"/>
<dbReference type="UniPathway" id="UPA00391"/>
<dbReference type="Proteomes" id="UP000008555">
    <property type="component" value="Chromosome"/>
</dbReference>
<dbReference type="GO" id="GO:0005524">
    <property type="term" value="F:ATP binding"/>
    <property type="evidence" value="ECO:0007669"/>
    <property type="project" value="UniProtKB-UniRule"/>
</dbReference>
<dbReference type="GO" id="GO:0016879">
    <property type="term" value="F:ligase activity, forming carbon-nitrogen bonds"/>
    <property type="evidence" value="ECO:0007669"/>
    <property type="project" value="UniProtKB-UniRule"/>
</dbReference>
<dbReference type="GO" id="GO:0008270">
    <property type="term" value="F:zinc ion binding"/>
    <property type="evidence" value="ECO:0007669"/>
    <property type="project" value="UniProtKB-UniRule"/>
</dbReference>
<dbReference type="GO" id="GO:0008616">
    <property type="term" value="P:queuosine biosynthetic process"/>
    <property type="evidence" value="ECO:0007669"/>
    <property type="project" value="UniProtKB-UniRule"/>
</dbReference>
<dbReference type="CDD" id="cd01995">
    <property type="entry name" value="QueC-like"/>
    <property type="match status" value="1"/>
</dbReference>
<dbReference type="FunFam" id="3.40.50.620:FF:000131">
    <property type="entry name" value="7-cyano-7-deazaguanine synthase"/>
    <property type="match status" value="1"/>
</dbReference>
<dbReference type="Gene3D" id="3.40.50.620">
    <property type="entry name" value="HUPs"/>
    <property type="match status" value="1"/>
</dbReference>
<dbReference type="HAMAP" id="MF_01633">
    <property type="entry name" value="QueC"/>
    <property type="match status" value="1"/>
</dbReference>
<dbReference type="InterPro" id="IPR018317">
    <property type="entry name" value="QueC"/>
</dbReference>
<dbReference type="InterPro" id="IPR014729">
    <property type="entry name" value="Rossmann-like_a/b/a_fold"/>
</dbReference>
<dbReference type="NCBIfam" id="TIGR00364">
    <property type="entry name" value="7-cyano-7-deazaguanine synthase QueC"/>
    <property type="match status" value="1"/>
</dbReference>
<dbReference type="PANTHER" id="PTHR42914">
    <property type="entry name" value="7-CYANO-7-DEAZAGUANINE SYNTHASE"/>
    <property type="match status" value="1"/>
</dbReference>
<dbReference type="PANTHER" id="PTHR42914:SF1">
    <property type="entry name" value="7-CYANO-7-DEAZAGUANINE SYNTHASE"/>
    <property type="match status" value="1"/>
</dbReference>
<dbReference type="Pfam" id="PF06508">
    <property type="entry name" value="QueC"/>
    <property type="match status" value="1"/>
</dbReference>
<dbReference type="PIRSF" id="PIRSF006293">
    <property type="entry name" value="ExsB"/>
    <property type="match status" value="1"/>
</dbReference>
<dbReference type="SUPFAM" id="SSF52402">
    <property type="entry name" value="Adenine nucleotide alpha hydrolases-like"/>
    <property type="match status" value="1"/>
</dbReference>